<dbReference type="EMBL" id="AF217988">
    <property type="protein sequence ID" value="AAG17231.1"/>
    <property type="molecule type" value="mRNA"/>
</dbReference>
<dbReference type="EMBL" id="AF193057">
    <property type="protein sequence ID" value="AAG22485.1"/>
    <property type="molecule type" value="mRNA"/>
</dbReference>
<dbReference type="EMBL" id="AK000223">
    <property type="protein sequence ID" value="BAA91019.1"/>
    <property type="molecule type" value="mRNA"/>
</dbReference>
<dbReference type="EMBL" id="AK297625">
    <property type="protein sequence ID" value="BAH12633.1"/>
    <property type="molecule type" value="mRNA"/>
</dbReference>
<dbReference type="EMBL" id="CH471091">
    <property type="protein sequence ID" value="EAW76605.1"/>
    <property type="molecule type" value="Genomic_DNA"/>
</dbReference>
<dbReference type="EMBL" id="CH471091">
    <property type="protein sequence ID" value="EAW76606.1"/>
    <property type="molecule type" value="Genomic_DNA"/>
</dbReference>
<dbReference type="EMBL" id="CH471091">
    <property type="protein sequence ID" value="EAW76608.1"/>
    <property type="molecule type" value="Genomic_DNA"/>
</dbReference>
<dbReference type="EMBL" id="BC011887">
    <property type="protein sequence ID" value="AAH11887.2"/>
    <property type="molecule type" value="mRNA"/>
</dbReference>
<dbReference type="EMBL" id="BC013603">
    <property type="protein sequence ID" value="AAH13603.2"/>
    <property type="molecule type" value="mRNA"/>
</dbReference>
<dbReference type="EMBL" id="X60153">
    <property type="protein sequence ID" value="CAB94195.1"/>
    <property type="molecule type" value="mRNA"/>
</dbReference>
<dbReference type="EMBL" id="X52356">
    <property type="protein sequence ID" value="CAA36582.1"/>
    <property type="molecule type" value="mRNA"/>
</dbReference>
<dbReference type="EMBL" id="X07290">
    <property type="protein sequence ID" value="CAA30269.1"/>
    <property type="molecule type" value="mRNA"/>
</dbReference>
<dbReference type="CCDS" id="CCDS43618.1">
    <molecule id="P17036-2"/>
</dbReference>
<dbReference type="CCDS" id="CCDS43619.1">
    <molecule id="P17036-1"/>
</dbReference>
<dbReference type="PIR" id="S00754">
    <property type="entry name" value="S00754"/>
</dbReference>
<dbReference type="RefSeq" id="NP_001265213.1">
    <molecule id="P17036-1"/>
    <property type="nucleotide sequence ID" value="NM_001278284.2"/>
</dbReference>
<dbReference type="RefSeq" id="NP_001265216.1">
    <molecule id="P17036-1"/>
    <property type="nucleotide sequence ID" value="NM_001278287.2"/>
</dbReference>
<dbReference type="RefSeq" id="NP_001265219.1">
    <molecule id="P17036-1"/>
    <property type="nucleotide sequence ID" value="NM_001278290.2"/>
</dbReference>
<dbReference type="RefSeq" id="NP_001305064.1">
    <molecule id="P17036-1"/>
    <property type="nucleotide sequence ID" value="NM_001318135.2"/>
</dbReference>
<dbReference type="RefSeq" id="NP_001305065.1">
    <property type="nucleotide sequence ID" value="NM_001318136.1"/>
</dbReference>
<dbReference type="RefSeq" id="NP_001305066.1">
    <property type="nucleotide sequence ID" value="NM_001318137.1"/>
</dbReference>
<dbReference type="RefSeq" id="NP_001358139.1">
    <molecule id="P17036-2"/>
    <property type="nucleotide sequence ID" value="NM_001371210.1"/>
</dbReference>
<dbReference type="RefSeq" id="NP_001358140.1">
    <molecule id="P17036-1"/>
    <property type="nucleotide sequence ID" value="NM_001371211.1"/>
</dbReference>
<dbReference type="RefSeq" id="NP_001358141.1">
    <molecule id="P17036-1"/>
    <property type="nucleotide sequence ID" value="NM_001371212.1"/>
</dbReference>
<dbReference type="RefSeq" id="NP_001358142.1">
    <molecule id="P17036-1"/>
    <property type="nucleotide sequence ID" value="NM_001371213.1"/>
</dbReference>
<dbReference type="RefSeq" id="NP_001358143.1">
    <molecule id="P17036-1"/>
    <property type="nucleotide sequence ID" value="NM_001371214.1"/>
</dbReference>
<dbReference type="RefSeq" id="NP_060185.2">
    <molecule id="P17036-2"/>
    <property type="nucleotide sequence ID" value="NM_017715.4"/>
</dbReference>
<dbReference type="RefSeq" id="NP_116313.3">
    <molecule id="P17036-1"/>
    <property type="nucleotide sequence ID" value="NM_032924.4"/>
</dbReference>
<dbReference type="RefSeq" id="XP_047276758.1">
    <molecule id="P17036-2"/>
    <property type="nucleotide sequence ID" value="XM_047420802.1"/>
</dbReference>
<dbReference type="RefSeq" id="XP_054214922.1">
    <molecule id="P17036-2"/>
    <property type="nucleotide sequence ID" value="XM_054358947.1"/>
</dbReference>
<dbReference type="SMR" id="P17036"/>
<dbReference type="BioGRID" id="113383">
    <property type="interactions" value="32"/>
</dbReference>
<dbReference type="FunCoup" id="P17036">
    <property type="interactions" value="117"/>
</dbReference>
<dbReference type="IntAct" id="P17036">
    <property type="interactions" value="43"/>
</dbReference>
<dbReference type="STRING" id="9606.ENSP00000306372"/>
<dbReference type="iPTMnet" id="P17036"/>
<dbReference type="PhosphoSitePlus" id="P17036"/>
<dbReference type="BioMuta" id="ZNF3"/>
<dbReference type="DMDM" id="46577682"/>
<dbReference type="jPOST" id="P17036"/>
<dbReference type="MassIVE" id="P17036"/>
<dbReference type="PaxDb" id="9606-ENSP00000306372"/>
<dbReference type="PeptideAtlas" id="P17036"/>
<dbReference type="ProteomicsDB" id="53438">
    <molecule id="P17036-1"/>
</dbReference>
<dbReference type="ProteomicsDB" id="53439">
    <molecule id="P17036-2"/>
</dbReference>
<dbReference type="Pumba" id="P17036"/>
<dbReference type="Antibodypedia" id="832">
    <property type="antibodies" value="114 antibodies from 21 providers"/>
</dbReference>
<dbReference type="DNASU" id="7551"/>
<dbReference type="Ensembl" id="ENST00000299667.9">
    <molecule id="P17036-1"/>
    <property type="protein sequence ID" value="ENSP00000299667.4"/>
    <property type="gene ID" value="ENSG00000166526.19"/>
</dbReference>
<dbReference type="Ensembl" id="ENST00000413658.6">
    <molecule id="P17036-2"/>
    <property type="protein sequence ID" value="ENSP00000399951.2"/>
    <property type="gene ID" value="ENSG00000166526.19"/>
</dbReference>
<dbReference type="Ensembl" id="ENST00000424697.5">
    <molecule id="P17036-1"/>
    <property type="protein sequence ID" value="ENSP00000415358.1"/>
    <property type="gene ID" value="ENSG00000166526.19"/>
</dbReference>
<dbReference type="GeneID" id="7551"/>
<dbReference type="KEGG" id="hsa:7551"/>
<dbReference type="MANE-Select" id="ENST00000299667.9">
    <property type="protein sequence ID" value="ENSP00000299667.4"/>
    <property type="RefSeq nucleotide sequence ID" value="NM_032924.5"/>
    <property type="RefSeq protein sequence ID" value="NP_116313.3"/>
</dbReference>
<dbReference type="UCSC" id="uc003usp.5">
    <molecule id="P17036-1"/>
    <property type="organism name" value="human"/>
</dbReference>
<dbReference type="AGR" id="HGNC:13089"/>
<dbReference type="CTD" id="7551"/>
<dbReference type="DisGeNET" id="7551"/>
<dbReference type="GeneCards" id="ZNF3"/>
<dbReference type="HGNC" id="HGNC:13089">
    <property type="gene designation" value="ZNF3"/>
</dbReference>
<dbReference type="HPA" id="ENSG00000166526">
    <property type="expression patterns" value="Low tissue specificity"/>
</dbReference>
<dbReference type="MIM" id="194510">
    <property type="type" value="gene"/>
</dbReference>
<dbReference type="MIM" id="601261">
    <property type="type" value="gene"/>
</dbReference>
<dbReference type="neXtProt" id="NX_P17036"/>
<dbReference type="OpenTargets" id="ENSG00000166526"/>
<dbReference type="PharmGKB" id="PA37664"/>
<dbReference type="VEuPathDB" id="HostDB:ENSG00000166526"/>
<dbReference type="eggNOG" id="KOG1721">
    <property type="taxonomic scope" value="Eukaryota"/>
</dbReference>
<dbReference type="GeneTree" id="ENSGT00940000153104"/>
<dbReference type="HOGENOM" id="CLU_1980905_0_0_1"/>
<dbReference type="InParanoid" id="P17036"/>
<dbReference type="OMA" id="MGDRPHK"/>
<dbReference type="OrthoDB" id="654211at2759"/>
<dbReference type="PAN-GO" id="P17036">
    <property type="GO annotations" value="3 GO annotations based on evolutionary models"/>
</dbReference>
<dbReference type="PhylomeDB" id="P17036"/>
<dbReference type="TreeFam" id="TF337732"/>
<dbReference type="PathwayCommons" id="P17036"/>
<dbReference type="Reactome" id="R-HSA-212436">
    <property type="pathway name" value="Generic Transcription Pathway"/>
</dbReference>
<dbReference type="SignaLink" id="P17036"/>
<dbReference type="BioGRID-ORCS" id="7551">
    <property type="hits" value="11 hits in 1180 CRISPR screens"/>
</dbReference>
<dbReference type="ChiTaRS" id="ZNF3">
    <property type="organism name" value="human"/>
</dbReference>
<dbReference type="GeneWiki" id="ZNF3"/>
<dbReference type="GenomeRNAi" id="7551"/>
<dbReference type="Pharos" id="P17036">
    <property type="development level" value="Tbio"/>
</dbReference>
<dbReference type="PRO" id="PR:P17036"/>
<dbReference type="Proteomes" id="UP000005640">
    <property type="component" value="Chromosome 7"/>
</dbReference>
<dbReference type="RNAct" id="P17036">
    <property type="molecule type" value="protein"/>
</dbReference>
<dbReference type="Bgee" id="ENSG00000166526">
    <property type="expression patterns" value="Expressed in right uterine tube and 172 other cell types or tissues"/>
</dbReference>
<dbReference type="ExpressionAtlas" id="P17036">
    <property type="expression patterns" value="baseline and differential"/>
</dbReference>
<dbReference type="GO" id="GO:0005634">
    <property type="term" value="C:nucleus"/>
    <property type="evidence" value="ECO:0000318"/>
    <property type="project" value="GO_Central"/>
</dbReference>
<dbReference type="GO" id="GO:0003677">
    <property type="term" value="F:DNA binding"/>
    <property type="evidence" value="ECO:0000303"/>
    <property type="project" value="UniProtKB"/>
</dbReference>
<dbReference type="GO" id="GO:0000981">
    <property type="term" value="F:DNA-binding transcription factor activity, RNA polymerase II-specific"/>
    <property type="evidence" value="ECO:0000318"/>
    <property type="project" value="GO_Central"/>
</dbReference>
<dbReference type="GO" id="GO:0042802">
    <property type="term" value="F:identical protein binding"/>
    <property type="evidence" value="ECO:0000353"/>
    <property type="project" value="IntAct"/>
</dbReference>
<dbReference type="GO" id="GO:0000977">
    <property type="term" value="F:RNA polymerase II transcription regulatory region sequence-specific DNA binding"/>
    <property type="evidence" value="ECO:0000318"/>
    <property type="project" value="GO_Central"/>
</dbReference>
<dbReference type="GO" id="GO:0008270">
    <property type="term" value="F:zinc ion binding"/>
    <property type="evidence" value="ECO:0000303"/>
    <property type="project" value="UniProtKB"/>
</dbReference>
<dbReference type="GO" id="GO:0030154">
    <property type="term" value="P:cell differentiation"/>
    <property type="evidence" value="ECO:0007669"/>
    <property type="project" value="UniProtKB-KW"/>
</dbReference>
<dbReference type="GO" id="GO:0045321">
    <property type="term" value="P:leukocyte activation"/>
    <property type="evidence" value="ECO:0000303"/>
    <property type="project" value="UniProtKB"/>
</dbReference>
<dbReference type="GO" id="GO:0006357">
    <property type="term" value="P:regulation of transcription by RNA polymerase II"/>
    <property type="evidence" value="ECO:0000318"/>
    <property type="project" value="GO_Central"/>
</dbReference>
<dbReference type="CDD" id="cd07765">
    <property type="entry name" value="KRAB_A-box"/>
    <property type="match status" value="1"/>
</dbReference>
<dbReference type="FunFam" id="3.30.160.60:FF:004137">
    <property type="match status" value="3"/>
</dbReference>
<dbReference type="FunFam" id="3.30.160.60:FF:000824">
    <property type="entry name" value="Zinc finger protein 184"/>
    <property type="match status" value="1"/>
</dbReference>
<dbReference type="FunFam" id="3.30.160.60:FF:000512">
    <property type="entry name" value="zinc finger protein 197 isoform X1"/>
    <property type="match status" value="1"/>
</dbReference>
<dbReference type="FunFam" id="3.30.160.60:FF:000352">
    <property type="entry name" value="zinc finger protein 3 homolog"/>
    <property type="match status" value="1"/>
</dbReference>
<dbReference type="FunFam" id="3.30.160.60:FF:002343">
    <property type="entry name" value="Zinc finger protein 33A"/>
    <property type="match status" value="1"/>
</dbReference>
<dbReference type="FunFam" id="3.30.160.60:FF:002402">
    <property type="entry name" value="Zinc finger protein 347"/>
    <property type="match status" value="3"/>
</dbReference>
<dbReference type="FunFam" id="3.30.160.60:FF:002331">
    <property type="entry name" value="Zinc finger protein 672"/>
    <property type="match status" value="1"/>
</dbReference>
<dbReference type="Gene3D" id="6.10.140.140">
    <property type="match status" value="1"/>
</dbReference>
<dbReference type="Gene3D" id="3.30.160.60">
    <property type="entry name" value="Classic Zinc Finger"/>
    <property type="match status" value="8"/>
</dbReference>
<dbReference type="InterPro" id="IPR001909">
    <property type="entry name" value="KRAB"/>
</dbReference>
<dbReference type="InterPro" id="IPR036051">
    <property type="entry name" value="KRAB_dom_sf"/>
</dbReference>
<dbReference type="InterPro" id="IPR036236">
    <property type="entry name" value="Znf_C2H2_sf"/>
</dbReference>
<dbReference type="InterPro" id="IPR013087">
    <property type="entry name" value="Znf_C2H2_type"/>
</dbReference>
<dbReference type="PANTHER" id="PTHR24379">
    <property type="entry name" value="KRAB AND ZINC FINGER DOMAIN-CONTAINING"/>
    <property type="match status" value="1"/>
</dbReference>
<dbReference type="PANTHER" id="PTHR24379:SF131">
    <property type="entry name" value="ZINC FINGER PROTEIN 737-LIKE-RELATED"/>
    <property type="match status" value="1"/>
</dbReference>
<dbReference type="Pfam" id="PF01352">
    <property type="entry name" value="KRAB"/>
    <property type="match status" value="1"/>
</dbReference>
<dbReference type="Pfam" id="PF00096">
    <property type="entry name" value="zf-C2H2"/>
    <property type="match status" value="8"/>
</dbReference>
<dbReference type="SMART" id="SM00349">
    <property type="entry name" value="KRAB"/>
    <property type="match status" value="1"/>
</dbReference>
<dbReference type="SMART" id="SM00355">
    <property type="entry name" value="ZnF_C2H2"/>
    <property type="match status" value="8"/>
</dbReference>
<dbReference type="SUPFAM" id="SSF57667">
    <property type="entry name" value="beta-beta-alpha zinc fingers"/>
    <property type="match status" value="5"/>
</dbReference>
<dbReference type="SUPFAM" id="SSF109640">
    <property type="entry name" value="KRAB domain (Kruppel-associated box)"/>
    <property type="match status" value="1"/>
</dbReference>
<dbReference type="PROSITE" id="PS50805">
    <property type="entry name" value="KRAB"/>
    <property type="match status" value="1"/>
</dbReference>
<dbReference type="PROSITE" id="PS00028">
    <property type="entry name" value="ZINC_FINGER_C2H2_1"/>
    <property type="match status" value="8"/>
</dbReference>
<dbReference type="PROSITE" id="PS50157">
    <property type="entry name" value="ZINC_FINGER_C2H2_2"/>
    <property type="match status" value="8"/>
</dbReference>
<protein>
    <recommendedName>
        <fullName>Zinc finger protein 3</fullName>
    </recommendedName>
    <alternativeName>
        <fullName>Zinc finger protein HF.12</fullName>
    </alternativeName>
    <alternativeName>
        <fullName>Zinc finger protein HZF3.1</fullName>
    </alternativeName>
    <alternativeName>
        <fullName>Zinc finger protein KOX25</fullName>
    </alternativeName>
</protein>
<organism>
    <name type="scientific">Homo sapiens</name>
    <name type="common">Human</name>
    <dbReference type="NCBI Taxonomy" id="9606"/>
    <lineage>
        <taxon>Eukaryota</taxon>
        <taxon>Metazoa</taxon>
        <taxon>Chordata</taxon>
        <taxon>Craniata</taxon>
        <taxon>Vertebrata</taxon>
        <taxon>Euteleostomi</taxon>
        <taxon>Mammalia</taxon>
        <taxon>Eutheria</taxon>
        <taxon>Euarchontoglires</taxon>
        <taxon>Primates</taxon>
        <taxon>Haplorrhini</taxon>
        <taxon>Catarrhini</taxon>
        <taxon>Hominidae</taxon>
        <taxon>Homo</taxon>
    </lineage>
</organism>
<accession>P17036</accession>
<accession>D6W5U0</accession>
<accession>P13683</accession>
<accession>Q9HBR4</accession>
<accession>Q9NNX8</accession>
<accession>Q9NXJ1</accession>
<accession>Q9UC15</accession>
<accession>Q9UC16</accession>
<evidence type="ECO:0000255" key="1">
    <source>
        <dbReference type="PROSITE-ProRule" id="PRU00042"/>
    </source>
</evidence>
<evidence type="ECO:0000255" key="2">
    <source>
        <dbReference type="PROSITE-ProRule" id="PRU00119"/>
    </source>
</evidence>
<evidence type="ECO:0000303" key="3">
    <source>
    </source>
</evidence>
<evidence type="ECO:0000303" key="4">
    <source ref="1"/>
</evidence>
<evidence type="ECO:0000305" key="5"/>
<evidence type="ECO:0007744" key="6">
    <source>
    </source>
</evidence>
<evidence type="ECO:0007744" key="7">
    <source>
    </source>
</evidence>
<evidence type="ECO:0007744" key="8">
    <source>
    </source>
</evidence>
<evidence type="ECO:0007744" key="9">
    <source>
    </source>
</evidence>
<gene>
    <name type="primary">ZNF3</name>
    <name type="synonym">KOX25</name>
</gene>
<keyword id="KW-0010">Activator</keyword>
<keyword id="KW-0025">Alternative splicing</keyword>
<keyword id="KW-0217">Developmental protein</keyword>
<keyword id="KW-0221">Differentiation</keyword>
<keyword id="KW-0238">DNA-binding</keyword>
<keyword id="KW-1017">Isopeptide bond</keyword>
<keyword id="KW-0479">Metal-binding</keyword>
<keyword id="KW-0539">Nucleus</keyword>
<keyword id="KW-0597">Phosphoprotein</keyword>
<keyword id="KW-1267">Proteomics identification</keyword>
<keyword id="KW-1185">Reference proteome</keyword>
<keyword id="KW-0677">Repeat</keyword>
<keyword id="KW-0804">Transcription</keyword>
<keyword id="KW-0805">Transcription regulation</keyword>
<keyword id="KW-0832">Ubl conjugation</keyword>
<keyword id="KW-0862">Zinc</keyword>
<keyword id="KW-0863">Zinc-finger</keyword>
<sequence length="446" mass="50916">METQADLVSQEPQALLDSALPSKVPAFSDKDSLGDEMLAAALLKAKSQELVTFEDVAVYFIRKEWKRLEPAQRDLYRDVMLENYGNVFSLDRETRTENDQEISEDTRSHGVLLGRFQKDISQGLKFKEAYEREVSLKRPLGNSPGERLNRKMPDFGQVTVEEKLTPRGERSEKYNDFGNSFTVNSNLISHQRLPVGDRPHKCDECSKSFNRTSDLIQHQRIHTGEKPYECNECGKAFSQSSHLIQHQRIHTGEKPYECSDCGKTFSCSSALILHRRIHTGEKPYECNECGKTFSWSSTLTHHQRIHTGEKPYACNECGKAFSRSSTLIHHQRIHTGEKPYECNECGKAFSQSSHLYQHQRIHTGEKPYECMECGGKFTYSSGLIQHQRIHTGENPYECSECGKAFRYSSALVRHQRIHTGEKPLNGIGMSKSSLRVTTELNIREST</sequence>
<comment type="function">
    <text>Involved in cell differentiation and/or proliferation.</text>
</comment>
<comment type="interaction">
    <interactant intactId="EBI-1640965">
        <id>P17036</id>
    </interactant>
    <interactant intactId="EBI-618309">
        <id>Q08379</id>
        <label>GOLGA2</label>
    </interactant>
    <organismsDiffer>false</organismsDiffer>
    <experiments>3</experiments>
</comment>
<comment type="interaction">
    <interactant intactId="EBI-1640965">
        <id>P17036</id>
    </interactant>
    <interactant intactId="EBI-3044087">
        <id>Q7Z3Y8</id>
        <label>KRT27</label>
    </interactant>
    <organismsDiffer>false</organismsDiffer>
    <experiments>3</experiments>
</comment>
<comment type="interaction">
    <interactant intactId="EBI-1640965">
        <id>P17036</id>
    </interactant>
    <interactant intactId="EBI-1216080">
        <id>Q9Y250</id>
        <label>LZTS1</label>
    </interactant>
    <organismsDiffer>false</organismsDiffer>
    <experiments>3</experiments>
</comment>
<comment type="interaction">
    <interactant intactId="EBI-1640965">
        <id>P17036</id>
    </interactant>
    <interactant intactId="EBI-307531">
        <id>P23508</id>
        <label>MCC</label>
    </interactant>
    <organismsDiffer>false</organismsDiffer>
    <experiments>3</experiments>
</comment>
<comment type="interaction">
    <interactant intactId="EBI-1640965">
        <id>P17036</id>
    </interactant>
    <interactant intactId="EBI-742948">
        <id>Q5JR59</id>
        <label>MTUS2</label>
    </interactant>
    <organismsDiffer>false</organismsDiffer>
    <experiments>3</experiments>
</comment>
<comment type="interaction">
    <interactant intactId="EBI-1640965">
        <id>P17036</id>
    </interactant>
    <interactant intactId="EBI-928842">
        <id>Q9GZM8</id>
        <label>NDEL1</label>
    </interactant>
    <organismsDiffer>false</organismsDiffer>
    <experiments>3</experiments>
</comment>
<comment type="interaction">
    <interactant intactId="EBI-1640965">
        <id>P17036</id>
    </interactant>
    <interactant intactId="EBI-348469">
        <id>Q15427</id>
        <label>SF3B4</label>
    </interactant>
    <organismsDiffer>false</organismsDiffer>
    <experiments>3</experiments>
</comment>
<comment type="interaction">
    <interactant intactId="EBI-1640965">
        <id>P17036</id>
    </interactant>
    <interactant intactId="EBI-2212028">
        <id>Q9Y2D8</id>
        <label>SSX2IP</label>
    </interactant>
    <organismsDiffer>false</organismsDiffer>
    <experiments>3</experiments>
</comment>
<comment type="interaction">
    <interactant intactId="EBI-1640965">
        <id>P17036</id>
    </interactant>
    <interactant intactId="EBI-3650647">
        <id>Q9BUZ4</id>
        <label>TRAF4</label>
    </interactant>
    <organismsDiffer>false</organismsDiffer>
    <experiments>8</experiments>
</comment>
<comment type="interaction">
    <interactant intactId="EBI-1640965">
        <id>P17036</id>
    </interactant>
    <interactant intactId="EBI-716093">
        <id>P13994</id>
        <label>YJU2B</label>
    </interactant>
    <organismsDiffer>false</organismsDiffer>
    <experiments>5</experiments>
</comment>
<comment type="interaction">
    <interactant intactId="EBI-1640965">
        <id>P17036</id>
    </interactant>
    <interactant intactId="EBI-1640204">
        <id>Q9UDV6</id>
        <label>ZNF212</label>
    </interactant>
    <organismsDiffer>false</organismsDiffer>
    <experiments>4</experiments>
</comment>
<comment type="interaction">
    <interactant intactId="EBI-1640965">
        <id>P17036</id>
    </interactant>
    <interactant intactId="EBI-1640965">
        <id>P17036</id>
        <label>ZNF3</label>
    </interactant>
    <organismsDiffer>false</organismsDiffer>
    <experiments>2</experiments>
</comment>
<comment type="subcellular location">
    <subcellularLocation>
        <location evidence="5">Nucleus</location>
    </subcellularLocation>
</comment>
<comment type="alternative products">
    <event type="alternative splicing"/>
    <isoform>
        <id>P17036-1</id>
        <name>1</name>
        <sequence type="displayed"/>
    </isoform>
    <isoform>
        <id>P17036-2</id>
        <name>2</name>
        <sequence type="described" ref="VSP_041156"/>
    </isoform>
</comment>
<comment type="similarity">
    <text evidence="5">Belongs to the krueppel C2H2-type zinc-finger protein family.</text>
</comment>
<name>ZNF3_HUMAN</name>
<proteinExistence type="evidence at protein level"/>
<reference key="1">
    <citation type="submission" date="1999-12" db="EMBL/GenBank/DDBJ databases">
        <title>Novel Human cDNA clones with function of inhibiting cancer cell growth.</title>
        <authorList>
            <person name="Gu J.R."/>
            <person name="Wan D.F."/>
            <person name="Zhao X.T."/>
            <person name="Zhou X.M."/>
            <person name="Jiang H.Q."/>
            <person name="Zhang P.P."/>
            <person name="Qin W.X."/>
            <person name="Huang Y."/>
            <person name="Qiu X.K."/>
            <person name="Qian L.F."/>
            <person name="He L.P."/>
            <person name="Li H.N."/>
            <person name="Yu Y."/>
            <person name="Yu J."/>
            <person name="Han L.H."/>
        </authorList>
    </citation>
    <scope>NUCLEOTIDE SEQUENCE [MRNA] (ISOFORM 2)</scope>
</reference>
<reference key="2">
    <citation type="journal article" date="2004" name="Nat. Genet.">
        <title>Complete sequencing and characterization of 21,243 full-length human cDNAs.</title>
        <authorList>
            <person name="Ota T."/>
            <person name="Suzuki Y."/>
            <person name="Nishikawa T."/>
            <person name="Otsuki T."/>
            <person name="Sugiyama T."/>
            <person name="Irie R."/>
            <person name="Wakamatsu A."/>
            <person name="Hayashi K."/>
            <person name="Sato H."/>
            <person name="Nagai K."/>
            <person name="Kimura K."/>
            <person name="Makita H."/>
            <person name="Sekine M."/>
            <person name="Obayashi M."/>
            <person name="Nishi T."/>
            <person name="Shibahara T."/>
            <person name="Tanaka T."/>
            <person name="Ishii S."/>
            <person name="Yamamoto J."/>
            <person name="Saito K."/>
            <person name="Kawai Y."/>
            <person name="Isono Y."/>
            <person name="Nakamura Y."/>
            <person name="Nagahari K."/>
            <person name="Murakami K."/>
            <person name="Yasuda T."/>
            <person name="Iwayanagi T."/>
            <person name="Wagatsuma M."/>
            <person name="Shiratori A."/>
            <person name="Sudo H."/>
            <person name="Hosoiri T."/>
            <person name="Kaku Y."/>
            <person name="Kodaira H."/>
            <person name="Kondo H."/>
            <person name="Sugawara M."/>
            <person name="Takahashi M."/>
            <person name="Kanda K."/>
            <person name="Yokoi T."/>
            <person name="Furuya T."/>
            <person name="Kikkawa E."/>
            <person name="Omura Y."/>
            <person name="Abe K."/>
            <person name="Kamihara K."/>
            <person name="Katsuta N."/>
            <person name="Sato K."/>
            <person name="Tanikawa M."/>
            <person name="Yamazaki M."/>
            <person name="Ninomiya K."/>
            <person name="Ishibashi T."/>
            <person name="Yamashita H."/>
            <person name="Murakawa K."/>
            <person name="Fujimori K."/>
            <person name="Tanai H."/>
            <person name="Kimata M."/>
            <person name="Watanabe M."/>
            <person name="Hiraoka S."/>
            <person name="Chiba Y."/>
            <person name="Ishida S."/>
            <person name="Ono Y."/>
            <person name="Takiguchi S."/>
            <person name="Watanabe S."/>
            <person name="Yosida M."/>
            <person name="Hotuta T."/>
            <person name="Kusano J."/>
            <person name="Kanehori K."/>
            <person name="Takahashi-Fujii A."/>
            <person name="Hara H."/>
            <person name="Tanase T.-O."/>
            <person name="Nomura Y."/>
            <person name="Togiya S."/>
            <person name="Komai F."/>
            <person name="Hara R."/>
            <person name="Takeuchi K."/>
            <person name="Arita M."/>
            <person name="Imose N."/>
            <person name="Musashino K."/>
            <person name="Yuuki H."/>
            <person name="Oshima A."/>
            <person name="Sasaki N."/>
            <person name="Aotsuka S."/>
            <person name="Yoshikawa Y."/>
            <person name="Matsunawa H."/>
            <person name="Ichihara T."/>
            <person name="Shiohata N."/>
            <person name="Sano S."/>
            <person name="Moriya S."/>
            <person name="Momiyama H."/>
            <person name="Satoh N."/>
            <person name="Takami S."/>
            <person name="Terashima Y."/>
            <person name="Suzuki O."/>
            <person name="Nakagawa S."/>
            <person name="Senoh A."/>
            <person name="Mizoguchi H."/>
            <person name="Goto Y."/>
            <person name="Shimizu F."/>
            <person name="Wakebe H."/>
            <person name="Hishigaki H."/>
            <person name="Watanabe T."/>
            <person name="Sugiyama A."/>
            <person name="Takemoto M."/>
            <person name="Kawakami B."/>
            <person name="Yamazaki M."/>
            <person name="Watanabe K."/>
            <person name="Kumagai A."/>
            <person name="Itakura S."/>
            <person name="Fukuzumi Y."/>
            <person name="Fujimori Y."/>
            <person name="Komiyama M."/>
            <person name="Tashiro H."/>
            <person name="Tanigami A."/>
            <person name="Fujiwara T."/>
            <person name="Ono T."/>
            <person name="Yamada K."/>
            <person name="Fujii Y."/>
            <person name="Ozaki K."/>
            <person name="Hirao M."/>
            <person name="Ohmori Y."/>
            <person name="Kawabata A."/>
            <person name="Hikiji T."/>
            <person name="Kobatake N."/>
            <person name="Inagaki H."/>
            <person name="Ikema Y."/>
            <person name="Okamoto S."/>
            <person name="Okitani R."/>
            <person name="Kawakami T."/>
            <person name="Noguchi S."/>
            <person name="Itoh T."/>
            <person name="Shigeta K."/>
            <person name="Senba T."/>
            <person name="Matsumura K."/>
            <person name="Nakajima Y."/>
            <person name="Mizuno T."/>
            <person name="Morinaga M."/>
            <person name="Sasaki M."/>
            <person name="Togashi T."/>
            <person name="Oyama M."/>
            <person name="Hata H."/>
            <person name="Watanabe M."/>
            <person name="Komatsu T."/>
            <person name="Mizushima-Sugano J."/>
            <person name="Satoh T."/>
            <person name="Shirai Y."/>
            <person name="Takahashi Y."/>
            <person name="Nakagawa K."/>
            <person name="Okumura K."/>
            <person name="Nagase T."/>
            <person name="Nomura N."/>
            <person name="Kikuchi H."/>
            <person name="Masuho Y."/>
            <person name="Yamashita R."/>
            <person name="Nakai K."/>
            <person name="Yada T."/>
            <person name="Nakamura Y."/>
            <person name="Ohara O."/>
            <person name="Isogai T."/>
            <person name="Sugano S."/>
        </authorList>
    </citation>
    <scope>NUCLEOTIDE SEQUENCE [LARGE SCALE MRNA] (ISOFORM 2)</scope>
    <scope>NUCLEOTIDE SEQUENCE [LARGE SCALE MRNA] OF 1-387 (ISOFORM 1)</scope>
    <source>
        <tissue>Colon mucosa</tissue>
    </source>
</reference>
<reference key="3">
    <citation type="submission" date="2005-09" db="EMBL/GenBank/DDBJ databases">
        <authorList>
            <person name="Mural R.J."/>
            <person name="Istrail S."/>
            <person name="Sutton G.G."/>
            <person name="Florea L."/>
            <person name="Halpern A.L."/>
            <person name="Mobarry C.M."/>
            <person name="Lippert R."/>
            <person name="Walenz B."/>
            <person name="Shatkay H."/>
            <person name="Dew I."/>
            <person name="Miller J.R."/>
            <person name="Flanigan M.J."/>
            <person name="Edwards N.J."/>
            <person name="Bolanos R."/>
            <person name="Fasulo D."/>
            <person name="Halldorsson B.V."/>
            <person name="Hannenhalli S."/>
            <person name="Turner R."/>
            <person name="Yooseph S."/>
            <person name="Lu F."/>
            <person name="Nusskern D.R."/>
            <person name="Shue B.C."/>
            <person name="Zheng X.H."/>
            <person name="Zhong F."/>
            <person name="Delcher A.L."/>
            <person name="Huson D.H."/>
            <person name="Kravitz S.A."/>
            <person name="Mouchard L."/>
            <person name="Reinert K."/>
            <person name="Remington K.A."/>
            <person name="Clark A.G."/>
            <person name="Waterman M.S."/>
            <person name="Eichler E.E."/>
            <person name="Adams M.D."/>
            <person name="Hunkapiller M.W."/>
            <person name="Myers E.W."/>
            <person name="Venter J.C."/>
        </authorList>
    </citation>
    <scope>NUCLEOTIDE SEQUENCE [LARGE SCALE GENOMIC DNA]</scope>
</reference>
<reference key="4">
    <citation type="journal article" date="2004" name="Genome Res.">
        <title>The status, quality, and expansion of the NIH full-length cDNA project: the Mammalian Gene Collection (MGC).</title>
        <authorList>
            <consortium name="The MGC Project Team"/>
        </authorList>
    </citation>
    <scope>NUCLEOTIDE SEQUENCE [LARGE SCALE MRNA] (ISOFORM 1)</scope>
    <source>
        <tissue>Ovary</tissue>
        <tissue>Skin</tissue>
    </source>
</reference>
<reference key="5">
    <citation type="journal article" date="1991" name="Nucleic Acids Res.">
        <title>Members of the zinc finger protein gene family sharing a conserved N-terminal module.</title>
        <authorList>
            <person name="Rosati M."/>
            <person name="Marino M."/>
            <person name="Franze A."/>
            <person name="Tramontano A."/>
            <person name="Grimaldi G."/>
        </authorList>
    </citation>
    <scope>NUCLEOTIDE SEQUENCE [MRNA] OF 1-250 (ISOFORM 1)</scope>
    <source>
        <tissue>Teratocarcinoma</tissue>
    </source>
</reference>
<reference key="6">
    <citation type="journal article" date="1990" name="New Biol.">
        <title>Multiple genes encoding zinc finger domains are expressed in human T cells.</title>
        <authorList>
            <person name="Thiesen H.-J."/>
        </authorList>
    </citation>
    <scope>NUCLEOTIDE SEQUENCE [MRNA] OF 340-395</scope>
    <source>
        <tissue>Lymphoid tissue</tissue>
    </source>
</reference>
<reference key="7">
    <citation type="journal article" date="1988" name="Nucleic Acids Res.">
        <title>Isolation of cDNAs encoding finger proteins and measurement of the corresponding mRNA levels during myeloid terminal differentiation.</title>
        <authorList>
            <person name="Pannuti A."/>
            <person name="Lanfrancone L."/>
            <person name="Pascucci A."/>
            <person name="Pelicci P.-G."/>
            <person name="la Mantia G."/>
            <person name="Lania L."/>
        </authorList>
    </citation>
    <scope>NUCLEOTIDE SEQUENCE [MRNA] OF 252-446</scope>
    <source>
        <tissue>Placenta</tissue>
    </source>
</reference>
<reference key="8">
    <citation type="journal article" date="2008" name="Mol. Cell">
        <title>Kinase-selective enrichment enables quantitative phosphoproteomics of the kinome across the cell cycle.</title>
        <authorList>
            <person name="Daub H."/>
            <person name="Olsen J.V."/>
            <person name="Bairlein M."/>
            <person name="Gnad F."/>
            <person name="Oppermann F.S."/>
            <person name="Korner R."/>
            <person name="Greff Z."/>
            <person name="Keri G."/>
            <person name="Stemmann O."/>
            <person name="Mann M."/>
        </authorList>
    </citation>
    <scope>PHOSPHORYLATION [LARGE SCALE ANALYSIS] AT SER-143</scope>
    <scope>IDENTIFICATION BY MASS SPECTROMETRY [LARGE SCALE ANALYSIS]</scope>
    <source>
        <tissue>Cervix carcinoma</tissue>
    </source>
</reference>
<reference key="9">
    <citation type="journal article" date="2013" name="J. Proteome Res.">
        <title>Toward a comprehensive characterization of a human cancer cell phosphoproteome.</title>
        <authorList>
            <person name="Zhou H."/>
            <person name="Di Palma S."/>
            <person name="Preisinger C."/>
            <person name="Peng M."/>
            <person name="Polat A.N."/>
            <person name="Heck A.J."/>
            <person name="Mohammed S."/>
        </authorList>
    </citation>
    <scope>PHOSPHORYLATION [LARGE SCALE ANALYSIS] AT THR-419</scope>
    <scope>IDENTIFICATION BY MASS SPECTROMETRY [LARGE SCALE ANALYSIS]</scope>
    <source>
        <tissue>Erythroleukemia</tissue>
    </source>
</reference>
<reference key="10">
    <citation type="journal article" date="2015" name="Cell Rep.">
        <title>SUMO-2 orchestrates chromatin modifiers in response to DNA damage.</title>
        <authorList>
            <person name="Hendriks I.A."/>
            <person name="Treffers L.W."/>
            <person name="Verlaan-de Vries M."/>
            <person name="Olsen J.V."/>
            <person name="Vertegaal A.C."/>
        </authorList>
    </citation>
    <scope>SUMOYLATION [LARGE SCALE ANALYSIS] AT LYS-151</scope>
    <scope>IDENTIFICATION BY MASS SPECTROMETRY [LARGE SCALE ANALYSIS]</scope>
</reference>
<reference key="11">
    <citation type="journal article" date="2017" name="Nat. Struct. Mol. Biol.">
        <title>Site-specific mapping of the human SUMO proteome reveals co-modification with phosphorylation.</title>
        <authorList>
            <person name="Hendriks I.A."/>
            <person name="Lyon D."/>
            <person name="Young C."/>
            <person name="Jensen L.J."/>
            <person name="Vertegaal A.C."/>
            <person name="Nielsen M.L."/>
        </authorList>
    </citation>
    <scope>SUMOYLATION [LARGE SCALE ANALYSIS] AT LYS-125; LYS-151; LYS-163; LYS-173; LYS-422 AND LYS-431</scope>
    <scope>IDENTIFICATION BY MASS SPECTROMETRY [LARGE SCALE ANALYSIS]</scope>
</reference>
<feature type="chain" id="PRO_0000047368" description="Zinc finger protein 3">
    <location>
        <begin position="1"/>
        <end position="446"/>
    </location>
</feature>
<feature type="domain" description="KRAB" evidence="2">
    <location>
        <begin position="51"/>
        <end position="123"/>
    </location>
</feature>
<feature type="zinc finger region" description="C2H2-type 1" evidence="1">
    <location>
        <begin position="200"/>
        <end position="222"/>
    </location>
</feature>
<feature type="zinc finger region" description="C2H2-type 2" evidence="1">
    <location>
        <begin position="228"/>
        <end position="250"/>
    </location>
</feature>
<feature type="zinc finger region" description="C2H2-type 3" evidence="1">
    <location>
        <begin position="256"/>
        <end position="278"/>
    </location>
</feature>
<feature type="zinc finger region" description="C2H2-type 4" evidence="1">
    <location>
        <begin position="284"/>
        <end position="306"/>
    </location>
</feature>
<feature type="zinc finger region" description="C2H2-type 5" evidence="1">
    <location>
        <begin position="312"/>
        <end position="334"/>
    </location>
</feature>
<feature type="zinc finger region" description="C2H2-type 6" evidence="1">
    <location>
        <begin position="340"/>
        <end position="362"/>
    </location>
</feature>
<feature type="zinc finger region" description="C2H2-type 7" evidence="1">
    <location>
        <begin position="368"/>
        <end position="390"/>
    </location>
</feature>
<feature type="zinc finger region" description="C2H2-type 8" evidence="1">
    <location>
        <begin position="396"/>
        <end position="418"/>
    </location>
</feature>
<feature type="modified residue" description="Phosphoserine" evidence="6">
    <location>
        <position position="143"/>
    </location>
</feature>
<feature type="modified residue" description="Phosphothreonine" evidence="7">
    <location>
        <position position="419"/>
    </location>
</feature>
<feature type="cross-link" description="Glycyl lysine isopeptide (Lys-Gly) (interchain with G-Cter in SUMO2)" evidence="9">
    <location>
        <position position="125"/>
    </location>
</feature>
<feature type="cross-link" description="Glycyl lysine isopeptide (Lys-Gly) (interchain with G-Cter in SUMO2)" evidence="8 9">
    <location>
        <position position="151"/>
    </location>
</feature>
<feature type="cross-link" description="Glycyl lysine isopeptide (Lys-Gly) (interchain with G-Cter in SUMO2)" evidence="9">
    <location>
        <position position="163"/>
    </location>
</feature>
<feature type="cross-link" description="Glycyl lysine isopeptide (Lys-Gly) (interchain with G-Cter in SUMO2)" evidence="9">
    <location>
        <position position="173"/>
    </location>
</feature>
<feature type="cross-link" description="Glycyl lysine isopeptide (Lys-Gly) (interchain with G-Cter in SUMO2)" evidence="9">
    <location>
        <position position="422"/>
    </location>
</feature>
<feature type="cross-link" description="Glycyl lysine isopeptide (Lys-Gly) (interchain with G-Cter in SUMO2)" evidence="9">
    <location>
        <position position="431"/>
    </location>
</feature>
<feature type="splice variant" id="VSP_041156" description="In isoform 2." evidence="3 4">
    <original>RETRTENDQEISEDTRSHGVLLGRFQKDISQGLKFKEAYEREVSLKRPLGNSPGERLNRKMPDFGQVTVEEKLTPRGERSEKYNDFGNSFTVNSNLISHQRLPVGDRPHKCDECSKSFNRTSDLIQHQRIHTGEKPYECNECGKAFSQSSHLIQHQRIHTGEKPYECSDCGKTFSCSSALILHRRIHTGEKPYECNECGKTFSWSSTLTHHQRIHTGEKPYACNECGKAFSRSSTLIHHQRIHTGEKPYECNECGKAFSQSSHLYQHQRIHTGEKPYECMECGGKFTYSSGLIQHQRIHTGENPYECSECGKAFRYSSALVRHQRIHTGEKPLNGIGMSKSSLRVTTELNIREST</original>
    <variation>WIHVCLTTQKVMLAWLTGTLSVAKGLCSSELASVEPPDTF</variation>
    <location>
        <begin position="92"/>
        <end position="446"/>
    </location>
</feature>
<feature type="sequence variant" id="VAR_052743" description="In dbSNP:rs11550034.">
    <original>I</original>
    <variation>T</variation>
    <location>
        <position position="102"/>
    </location>
</feature>
<feature type="sequence conflict" description="In Ref. 2; BAA91019." evidence="5" ref="2">
    <original>P</original>
    <variation>L</variation>
    <location>
        <position position="21"/>
    </location>
</feature>
<feature type="sequence conflict" description="In Ref. 7; CAA30269." evidence="5" ref="7">
    <original>GEKPY</original>
    <variation>IRDSG</variation>
    <location>
        <begin position="252"/>
        <end position="256"/>
    </location>
</feature>
<feature type="sequence conflict" description="In Ref. 2; BAA91019." evidence="5" ref="2">
    <original>GEKPYECNECGKAFSQSSHLYQHQRIHTGEKPYECMECGGKFTYSSGLIQHQ</original>
    <variation>EALPTFVTLIRLLPSVDPIVTNEAAFPAESLATIFALIWRLFCVHSLMFKKV</variation>
    <location>
        <begin position="336"/>
        <end position="387"/>
    </location>
</feature>